<sequence length="314" mass="33786">MKKNPKISLIGSGNIGGTLAHLISIKELGDIVLFDVAEGVPQGKALDLMQAGTMLGSDIKIKGSNNYKDIEGSDAIIITAGLPRKPGMSRDDLISVNTKIMKDVAQNIKKYAPSAFVIVITNPLDVMVYVILKESGLPHNKVIGMAGVLDSSRFNLFLAEEFKVSVNSVNSIVLGGHGEAMVPLARYSTVSGIPIPDLIKMGLSSNENIEKIIDRTRNGGGEIVALLKTGSAYYAPATSAIEMLESYLKDKRQILTCAAYLQGEYGIHDLYVGVPIIIGTEGVLNVIELQLTKEEKALFDKSVEGVRKLIEMVK</sequence>
<name>MDH_RICCK</name>
<protein>
    <recommendedName>
        <fullName evidence="1">Malate dehydrogenase</fullName>
        <ecNumber evidence="1">1.1.1.37</ecNumber>
    </recommendedName>
</protein>
<comment type="function">
    <text evidence="1">Catalyzes the reversible oxidation of malate to oxaloacetate.</text>
</comment>
<comment type="catalytic activity">
    <reaction evidence="1">
        <text>(S)-malate + NAD(+) = oxaloacetate + NADH + H(+)</text>
        <dbReference type="Rhea" id="RHEA:21432"/>
        <dbReference type="ChEBI" id="CHEBI:15378"/>
        <dbReference type="ChEBI" id="CHEBI:15589"/>
        <dbReference type="ChEBI" id="CHEBI:16452"/>
        <dbReference type="ChEBI" id="CHEBI:57540"/>
        <dbReference type="ChEBI" id="CHEBI:57945"/>
        <dbReference type="EC" id="1.1.1.37"/>
    </reaction>
</comment>
<comment type="similarity">
    <text evidence="1">Belongs to the LDH/MDH superfamily. MDH type 3 family.</text>
</comment>
<gene>
    <name evidence="1" type="primary">mdh</name>
    <name type="ordered locus">A1E_03540</name>
</gene>
<feature type="chain" id="PRO_1000026490" description="Malate dehydrogenase">
    <location>
        <begin position="1"/>
        <end position="314"/>
    </location>
</feature>
<feature type="active site" description="Proton acceptor" evidence="1">
    <location>
        <position position="177"/>
    </location>
</feature>
<feature type="binding site" evidence="1">
    <location>
        <begin position="11"/>
        <end position="16"/>
    </location>
    <ligand>
        <name>NAD(+)</name>
        <dbReference type="ChEBI" id="CHEBI:57540"/>
    </ligand>
</feature>
<feature type="binding site" evidence="1">
    <location>
        <position position="35"/>
    </location>
    <ligand>
        <name>NAD(+)</name>
        <dbReference type="ChEBI" id="CHEBI:57540"/>
    </ligand>
</feature>
<feature type="binding site" evidence="1">
    <location>
        <position position="84"/>
    </location>
    <ligand>
        <name>substrate</name>
    </ligand>
</feature>
<feature type="binding site" evidence="1">
    <location>
        <position position="90"/>
    </location>
    <ligand>
        <name>substrate</name>
    </ligand>
</feature>
<feature type="binding site" evidence="1">
    <location>
        <position position="97"/>
    </location>
    <ligand>
        <name>NAD(+)</name>
        <dbReference type="ChEBI" id="CHEBI:57540"/>
    </ligand>
</feature>
<feature type="binding site" evidence="1">
    <location>
        <begin position="120"/>
        <end position="122"/>
    </location>
    <ligand>
        <name>NAD(+)</name>
        <dbReference type="ChEBI" id="CHEBI:57540"/>
    </ligand>
</feature>
<feature type="binding site" evidence="1">
    <location>
        <position position="122"/>
    </location>
    <ligand>
        <name>substrate</name>
    </ligand>
</feature>
<feature type="binding site" evidence="1">
    <location>
        <position position="153"/>
    </location>
    <ligand>
        <name>substrate</name>
    </ligand>
</feature>
<dbReference type="EC" id="1.1.1.37" evidence="1"/>
<dbReference type="EMBL" id="CP000409">
    <property type="protein sequence ID" value="ABV73641.1"/>
    <property type="molecule type" value="Genomic_DNA"/>
</dbReference>
<dbReference type="RefSeq" id="WP_012148836.1">
    <property type="nucleotide sequence ID" value="NC_009879.1"/>
</dbReference>
<dbReference type="SMR" id="A8EZ58"/>
<dbReference type="STRING" id="293613.A1E_03540"/>
<dbReference type="KEGG" id="rcm:A1E_03540"/>
<dbReference type="eggNOG" id="COG0039">
    <property type="taxonomic scope" value="Bacteria"/>
</dbReference>
<dbReference type="HOGENOM" id="CLU_045401_2_1_5"/>
<dbReference type="Proteomes" id="UP000007056">
    <property type="component" value="Chromosome"/>
</dbReference>
<dbReference type="GO" id="GO:0004459">
    <property type="term" value="F:L-lactate dehydrogenase activity"/>
    <property type="evidence" value="ECO:0007669"/>
    <property type="project" value="TreeGrafter"/>
</dbReference>
<dbReference type="GO" id="GO:0030060">
    <property type="term" value="F:L-malate dehydrogenase (NAD+) activity"/>
    <property type="evidence" value="ECO:0007669"/>
    <property type="project" value="UniProtKB-UniRule"/>
</dbReference>
<dbReference type="GO" id="GO:0006089">
    <property type="term" value="P:lactate metabolic process"/>
    <property type="evidence" value="ECO:0007669"/>
    <property type="project" value="TreeGrafter"/>
</dbReference>
<dbReference type="GO" id="GO:0006099">
    <property type="term" value="P:tricarboxylic acid cycle"/>
    <property type="evidence" value="ECO:0007669"/>
    <property type="project" value="UniProtKB-UniRule"/>
</dbReference>
<dbReference type="CDD" id="cd01339">
    <property type="entry name" value="LDH-like_MDH"/>
    <property type="match status" value="1"/>
</dbReference>
<dbReference type="FunFam" id="3.40.50.720:FF:000018">
    <property type="entry name" value="Malate dehydrogenase"/>
    <property type="match status" value="1"/>
</dbReference>
<dbReference type="FunFam" id="3.90.110.10:FF:000004">
    <property type="entry name" value="Malate dehydrogenase"/>
    <property type="match status" value="1"/>
</dbReference>
<dbReference type="Gene3D" id="3.90.110.10">
    <property type="entry name" value="Lactate dehydrogenase/glycoside hydrolase, family 4, C-terminal"/>
    <property type="match status" value="1"/>
</dbReference>
<dbReference type="Gene3D" id="3.40.50.720">
    <property type="entry name" value="NAD(P)-binding Rossmann-like Domain"/>
    <property type="match status" value="1"/>
</dbReference>
<dbReference type="HAMAP" id="MF_00487">
    <property type="entry name" value="Malate_dehydrog_3"/>
    <property type="match status" value="1"/>
</dbReference>
<dbReference type="InterPro" id="IPR001557">
    <property type="entry name" value="L-lactate/malate_DH"/>
</dbReference>
<dbReference type="InterPro" id="IPR022383">
    <property type="entry name" value="Lactate/malate_DH_C"/>
</dbReference>
<dbReference type="InterPro" id="IPR001236">
    <property type="entry name" value="Lactate/malate_DH_N"/>
</dbReference>
<dbReference type="InterPro" id="IPR015955">
    <property type="entry name" value="Lactate_DH/Glyco_Ohase_4_C"/>
</dbReference>
<dbReference type="InterPro" id="IPR011275">
    <property type="entry name" value="Malate_DH_type3"/>
</dbReference>
<dbReference type="InterPro" id="IPR036291">
    <property type="entry name" value="NAD(P)-bd_dom_sf"/>
</dbReference>
<dbReference type="NCBIfam" id="TIGR01763">
    <property type="entry name" value="MalateDH_bact"/>
    <property type="match status" value="1"/>
</dbReference>
<dbReference type="NCBIfam" id="NF004863">
    <property type="entry name" value="PRK06223.1"/>
    <property type="match status" value="1"/>
</dbReference>
<dbReference type="PANTHER" id="PTHR43128">
    <property type="entry name" value="L-2-HYDROXYCARBOXYLATE DEHYDROGENASE (NAD(P)(+))"/>
    <property type="match status" value="1"/>
</dbReference>
<dbReference type="PANTHER" id="PTHR43128:SF16">
    <property type="entry name" value="L-LACTATE DEHYDROGENASE"/>
    <property type="match status" value="1"/>
</dbReference>
<dbReference type="Pfam" id="PF02866">
    <property type="entry name" value="Ldh_1_C"/>
    <property type="match status" value="1"/>
</dbReference>
<dbReference type="Pfam" id="PF00056">
    <property type="entry name" value="Ldh_1_N"/>
    <property type="match status" value="1"/>
</dbReference>
<dbReference type="PIRSF" id="PIRSF000102">
    <property type="entry name" value="Lac_mal_DH"/>
    <property type="match status" value="1"/>
</dbReference>
<dbReference type="PRINTS" id="PR00086">
    <property type="entry name" value="LLDHDRGNASE"/>
</dbReference>
<dbReference type="SUPFAM" id="SSF56327">
    <property type="entry name" value="LDH C-terminal domain-like"/>
    <property type="match status" value="1"/>
</dbReference>
<dbReference type="SUPFAM" id="SSF51735">
    <property type="entry name" value="NAD(P)-binding Rossmann-fold domains"/>
    <property type="match status" value="1"/>
</dbReference>
<proteinExistence type="inferred from homology"/>
<organism>
    <name type="scientific">Rickettsia canadensis (strain McKiel)</name>
    <dbReference type="NCBI Taxonomy" id="293613"/>
    <lineage>
        <taxon>Bacteria</taxon>
        <taxon>Pseudomonadati</taxon>
        <taxon>Pseudomonadota</taxon>
        <taxon>Alphaproteobacteria</taxon>
        <taxon>Rickettsiales</taxon>
        <taxon>Rickettsiaceae</taxon>
        <taxon>Rickettsieae</taxon>
        <taxon>Rickettsia</taxon>
        <taxon>belli group</taxon>
    </lineage>
</organism>
<evidence type="ECO:0000255" key="1">
    <source>
        <dbReference type="HAMAP-Rule" id="MF_00487"/>
    </source>
</evidence>
<accession>A8EZ58</accession>
<keyword id="KW-0520">NAD</keyword>
<keyword id="KW-0560">Oxidoreductase</keyword>
<keyword id="KW-0816">Tricarboxylic acid cycle</keyword>
<reference key="1">
    <citation type="submission" date="2007-09" db="EMBL/GenBank/DDBJ databases">
        <title>Complete genome sequence of Rickettsia canadensis.</title>
        <authorList>
            <person name="Madan A."/>
            <person name="Fahey J."/>
            <person name="Helton E."/>
            <person name="Ketteman M."/>
            <person name="Madan A."/>
            <person name="Rodrigues S."/>
            <person name="Sanchez A."/>
            <person name="Whiting M."/>
            <person name="Dasch G."/>
            <person name="Eremeeva M."/>
        </authorList>
    </citation>
    <scope>NUCLEOTIDE SEQUENCE [LARGE SCALE GENOMIC DNA]</scope>
    <source>
        <strain>McKiel</strain>
    </source>
</reference>